<name>RUVB_PELTS</name>
<accession>A5D3G1</accession>
<gene>
    <name evidence="1" type="primary">ruvB</name>
    <name type="ordered locus">PTH_1027</name>
</gene>
<organism>
    <name type="scientific">Pelotomaculum thermopropionicum (strain DSM 13744 / JCM 10971 / SI)</name>
    <dbReference type="NCBI Taxonomy" id="370438"/>
    <lineage>
        <taxon>Bacteria</taxon>
        <taxon>Bacillati</taxon>
        <taxon>Bacillota</taxon>
        <taxon>Clostridia</taxon>
        <taxon>Eubacteriales</taxon>
        <taxon>Desulfotomaculaceae</taxon>
        <taxon>Pelotomaculum</taxon>
    </lineage>
</organism>
<proteinExistence type="inferred from homology"/>
<feature type="chain" id="PRO_1000074092" description="Holliday junction branch migration complex subunit RuvB">
    <location>
        <begin position="1"/>
        <end position="341"/>
    </location>
</feature>
<feature type="region of interest" description="Large ATPase domain (RuvB-L)" evidence="1">
    <location>
        <begin position="1"/>
        <end position="182"/>
    </location>
</feature>
<feature type="region of interest" description="Small ATPAse domain (RuvB-S)" evidence="1">
    <location>
        <begin position="183"/>
        <end position="253"/>
    </location>
</feature>
<feature type="region of interest" description="Head domain (RuvB-H)" evidence="1">
    <location>
        <begin position="256"/>
        <end position="341"/>
    </location>
</feature>
<feature type="binding site" evidence="1">
    <location>
        <position position="21"/>
    </location>
    <ligand>
        <name>ATP</name>
        <dbReference type="ChEBI" id="CHEBI:30616"/>
    </ligand>
</feature>
<feature type="binding site" evidence="1">
    <location>
        <position position="22"/>
    </location>
    <ligand>
        <name>ATP</name>
        <dbReference type="ChEBI" id="CHEBI:30616"/>
    </ligand>
</feature>
<feature type="binding site" evidence="1">
    <location>
        <position position="63"/>
    </location>
    <ligand>
        <name>ATP</name>
        <dbReference type="ChEBI" id="CHEBI:30616"/>
    </ligand>
</feature>
<feature type="binding site" evidence="1">
    <location>
        <position position="66"/>
    </location>
    <ligand>
        <name>ATP</name>
        <dbReference type="ChEBI" id="CHEBI:30616"/>
    </ligand>
</feature>
<feature type="binding site" evidence="1">
    <location>
        <position position="67"/>
    </location>
    <ligand>
        <name>ATP</name>
        <dbReference type="ChEBI" id="CHEBI:30616"/>
    </ligand>
</feature>
<feature type="binding site" evidence="1">
    <location>
        <position position="67"/>
    </location>
    <ligand>
        <name>Mg(2+)</name>
        <dbReference type="ChEBI" id="CHEBI:18420"/>
    </ligand>
</feature>
<feature type="binding site" evidence="1">
    <location>
        <position position="68"/>
    </location>
    <ligand>
        <name>ATP</name>
        <dbReference type="ChEBI" id="CHEBI:30616"/>
    </ligand>
</feature>
<feature type="binding site" evidence="1">
    <location>
        <begin position="129"/>
        <end position="131"/>
    </location>
    <ligand>
        <name>ATP</name>
        <dbReference type="ChEBI" id="CHEBI:30616"/>
    </ligand>
</feature>
<feature type="binding site" evidence="1">
    <location>
        <position position="172"/>
    </location>
    <ligand>
        <name>ATP</name>
        <dbReference type="ChEBI" id="CHEBI:30616"/>
    </ligand>
</feature>
<feature type="binding site" evidence="1">
    <location>
        <position position="182"/>
    </location>
    <ligand>
        <name>ATP</name>
        <dbReference type="ChEBI" id="CHEBI:30616"/>
    </ligand>
</feature>
<feature type="binding site" evidence="1">
    <location>
        <position position="219"/>
    </location>
    <ligand>
        <name>ATP</name>
        <dbReference type="ChEBI" id="CHEBI:30616"/>
    </ligand>
</feature>
<feature type="binding site" evidence="1">
    <location>
        <position position="311"/>
    </location>
    <ligand>
        <name>DNA</name>
        <dbReference type="ChEBI" id="CHEBI:16991"/>
    </ligand>
</feature>
<feature type="binding site" evidence="1">
    <location>
        <position position="316"/>
    </location>
    <ligand>
        <name>DNA</name>
        <dbReference type="ChEBI" id="CHEBI:16991"/>
    </ligand>
</feature>
<evidence type="ECO:0000255" key="1">
    <source>
        <dbReference type="HAMAP-Rule" id="MF_00016"/>
    </source>
</evidence>
<reference key="1">
    <citation type="journal article" date="2008" name="Genome Res.">
        <title>The genome of Pelotomaculum thermopropionicum reveals niche-associated evolution in anaerobic microbiota.</title>
        <authorList>
            <person name="Kosaka T."/>
            <person name="Kato S."/>
            <person name="Shimoyama T."/>
            <person name="Ishii S."/>
            <person name="Abe T."/>
            <person name="Watanabe K."/>
        </authorList>
    </citation>
    <scope>NUCLEOTIDE SEQUENCE [LARGE SCALE GENOMIC DNA]</scope>
    <source>
        <strain>DSM 13744 / JCM 10971 / SI</strain>
    </source>
</reference>
<sequence>MKDRLISAVARPEDADVDTSLRPRLLAEYIGQEKVKETISVFIQAARGRGEPLDHVLLFGPPGLGKTTLANIIANEMGVSIRTTSGPAVERPGDLAAILTSLSQGDILFIDEIHRLSRTVEEVLYPAMEDYALDIVIGKGPGARSLRLELPRFTLVGATTRAGLLTSPLRDRFGVISRLEYYRPEDLVLIVNRSARILGIEITAEGAFEIARRSRGTPRVANRLLKRVRDYAQVRANGVITCEVAVEALKFLEVDPLGLDFADRRLLLTIIQKFGGGPVGLETIATAVNEEPETVEDVYEPYLIQLGMLARTPRGRVTTPLAFRHLGLEPAREETDQVSLW</sequence>
<dbReference type="EC" id="3.6.4.-" evidence="1"/>
<dbReference type="EMBL" id="AP009389">
    <property type="protein sequence ID" value="BAF59208.1"/>
    <property type="molecule type" value="Genomic_DNA"/>
</dbReference>
<dbReference type="SMR" id="A5D3G1"/>
<dbReference type="STRING" id="370438.PTH_1027"/>
<dbReference type="KEGG" id="pth:PTH_1027"/>
<dbReference type="eggNOG" id="COG2255">
    <property type="taxonomic scope" value="Bacteria"/>
</dbReference>
<dbReference type="HOGENOM" id="CLU_055599_1_0_9"/>
<dbReference type="Proteomes" id="UP000006556">
    <property type="component" value="Chromosome"/>
</dbReference>
<dbReference type="GO" id="GO:0005737">
    <property type="term" value="C:cytoplasm"/>
    <property type="evidence" value="ECO:0007669"/>
    <property type="project" value="UniProtKB-SubCell"/>
</dbReference>
<dbReference type="GO" id="GO:0048476">
    <property type="term" value="C:Holliday junction resolvase complex"/>
    <property type="evidence" value="ECO:0007669"/>
    <property type="project" value="UniProtKB-UniRule"/>
</dbReference>
<dbReference type="GO" id="GO:0005524">
    <property type="term" value="F:ATP binding"/>
    <property type="evidence" value="ECO:0007669"/>
    <property type="project" value="UniProtKB-UniRule"/>
</dbReference>
<dbReference type="GO" id="GO:0016887">
    <property type="term" value="F:ATP hydrolysis activity"/>
    <property type="evidence" value="ECO:0007669"/>
    <property type="project" value="InterPro"/>
</dbReference>
<dbReference type="GO" id="GO:0000400">
    <property type="term" value="F:four-way junction DNA binding"/>
    <property type="evidence" value="ECO:0007669"/>
    <property type="project" value="UniProtKB-UniRule"/>
</dbReference>
<dbReference type="GO" id="GO:0009378">
    <property type="term" value="F:four-way junction helicase activity"/>
    <property type="evidence" value="ECO:0007669"/>
    <property type="project" value="InterPro"/>
</dbReference>
<dbReference type="GO" id="GO:0006310">
    <property type="term" value="P:DNA recombination"/>
    <property type="evidence" value="ECO:0007669"/>
    <property type="project" value="UniProtKB-UniRule"/>
</dbReference>
<dbReference type="GO" id="GO:0006281">
    <property type="term" value="P:DNA repair"/>
    <property type="evidence" value="ECO:0007669"/>
    <property type="project" value="UniProtKB-UniRule"/>
</dbReference>
<dbReference type="CDD" id="cd00009">
    <property type="entry name" value="AAA"/>
    <property type="match status" value="1"/>
</dbReference>
<dbReference type="FunFam" id="3.40.50.300:FF:000073">
    <property type="entry name" value="Holliday junction ATP-dependent DNA helicase RuvB"/>
    <property type="match status" value="1"/>
</dbReference>
<dbReference type="Gene3D" id="1.10.8.60">
    <property type="match status" value="1"/>
</dbReference>
<dbReference type="Gene3D" id="3.40.50.300">
    <property type="entry name" value="P-loop containing nucleotide triphosphate hydrolases"/>
    <property type="match status" value="1"/>
</dbReference>
<dbReference type="Gene3D" id="1.10.10.10">
    <property type="entry name" value="Winged helix-like DNA-binding domain superfamily/Winged helix DNA-binding domain"/>
    <property type="match status" value="1"/>
</dbReference>
<dbReference type="HAMAP" id="MF_00016">
    <property type="entry name" value="DNA_HJ_migration_RuvB"/>
    <property type="match status" value="1"/>
</dbReference>
<dbReference type="InterPro" id="IPR003593">
    <property type="entry name" value="AAA+_ATPase"/>
</dbReference>
<dbReference type="InterPro" id="IPR041445">
    <property type="entry name" value="AAA_lid_4"/>
</dbReference>
<dbReference type="InterPro" id="IPR004605">
    <property type="entry name" value="DNA_helicase_Holl-junc_RuvB"/>
</dbReference>
<dbReference type="InterPro" id="IPR027417">
    <property type="entry name" value="P-loop_NTPase"/>
</dbReference>
<dbReference type="InterPro" id="IPR008824">
    <property type="entry name" value="RuvB-like_N"/>
</dbReference>
<dbReference type="InterPro" id="IPR008823">
    <property type="entry name" value="RuvB_C"/>
</dbReference>
<dbReference type="InterPro" id="IPR036388">
    <property type="entry name" value="WH-like_DNA-bd_sf"/>
</dbReference>
<dbReference type="InterPro" id="IPR036390">
    <property type="entry name" value="WH_DNA-bd_sf"/>
</dbReference>
<dbReference type="NCBIfam" id="NF000868">
    <property type="entry name" value="PRK00080.1"/>
    <property type="match status" value="1"/>
</dbReference>
<dbReference type="NCBIfam" id="TIGR00635">
    <property type="entry name" value="ruvB"/>
    <property type="match status" value="1"/>
</dbReference>
<dbReference type="PANTHER" id="PTHR42848">
    <property type="match status" value="1"/>
</dbReference>
<dbReference type="PANTHER" id="PTHR42848:SF1">
    <property type="entry name" value="HOLLIDAY JUNCTION BRANCH MIGRATION COMPLEX SUBUNIT RUVB"/>
    <property type="match status" value="1"/>
</dbReference>
<dbReference type="Pfam" id="PF17864">
    <property type="entry name" value="AAA_lid_4"/>
    <property type="match status" value="1"/>
</dbReference>
<dbReference type="Pfam" id="PF05491">
    <property type="entry name" value="RuvB_C"/>
    <property type="match status" value="1"/>
</dbReference>
<dbReference type="Pfam" id="PF05496">
    <property type="entry name" value="RuvB_N"/>
    <property type="match status" value="1"/>
</dbReference>
<dbReference type="SMART" id="SM00382">
    <property type="entry name" value="AAA"/>
    <property type="match status" value="1"/>
</dbReference>
<dbReference type="SUPFAM" id="SSF52540">
    <property type="entry name" value="P-loop containing nucleoside triphosphate hydrolases"/>
    <property type="match status" value="1"/>
</dbReference>
<dbReference type="SUPFAM" id="SSF46785">
    <property type="entry name" value="Winged helix' DNA-binding domain"/>
    <property type="match status" value="1"/>
</dbReference>
<comment type="function">
    <text evidence="1">The RuvA-RuvB-RuvC complex processes Holliday junction (HJ) DNA during genetic recombination and DNA repair, while the RuvA-RuvB complex plays an important role in the rescue of blocked DNA replication forks via replication fork reversal (RFR). RuvA specifically binds to HJ cruciform DNA, conferring on it an open structure. The RuvB hexamer acts as an ATP-dependent pump, pulling dsDNA into and through the RuvAB complex. RuvB forms 2 homohexamers on either side of HJ DNA bound by 1 or 2 RuvA tetramers; 4 subunits per hexamer contact DNA at a time. Coordinated motions by a converter formed by DNA-disengaged RuvB subunits stimulates ATP hydrolysis and nucleotide exchange. Immobilization of the converter enables RuvB to convert the ATP-contained energy into a lever motion, pulling 2 nucleotides of DNA out of the RuvA tetramer per ATP hydrolyzed, thus driving DNA branch migration. The RuvB motors rotate together with the DNA substrate, which together with the progressing nucleotide cycle form the mechanistic basis for DNA recombination by continuous HJ branch migration. Branch migration allows RuvC to scan DNA until it finds its consensus sequence, where it cleaves and resolves cruciform DNA.</text>
</comment>
<comment type="catalytic activity">
    <reaction evidence="1">
        <text>ATP + H2O = ADP + phosphate + H(+)</text>
        <dbReference type="Rhea" id="RHEA:13065"/>
        <dbReference type="ChEBI" id="CHEBI:15377"/>
        <dbReference type="ChEBI" id="CHEBI:15378"/>
        <dbReference type="ChEBI" id="CHEBI:30616"/>
        <dbReference type="ChEBI" id="CHEBI:43474"/>
        <dbReference type="ChEBI" id="CHEBI:456216"/>
    </reaction>
</comment>
<comment type="subunit">
    <text evidence="1">Homohexamer. Forms an RuvA(8)-RuvB(12)-Holliday junction (HJ) complex. HJ DNA is sandwiched between 2 RuvA tetramers; dsDNA enters through RuvA and exits via RuvB. An RuvB hexamer assembles on each DNA strand where it exits the tetramer. Each RuvB hexamer is contacted by two RuvA subunits (via domain III) on 2 adjacent RuvB subunits; this complex drives branch migration. In the full resolvosome a probable DNA-RuvA(4)-RuvB(12)-RuvC(2) complex forms which resolves the HJ.</text>
</comment>
<comment type="subcellular location">
    <subcellularLocation>
        <location evidence="1">Cytoplasm</location>
    </subcellularLocation>
</comment>
<comment type="domain">
    <text evidence="1">Has 3 domains, the large (RuvB-L) and small ATPase (RuvB-S) domains and the C-terminal head (RuvB-H) domain. The head domain binds DNA, while the ATPase domains jointly bind ATP, ADP or are empty depending on the state of the subunit in the translocation cycle. During a single DNA translocation step the structure of each domain remains the same, but their relative positions change.</text>
</comment>
<comment type="similarity">
    <text evidence="1">Belongs to the RuvB family.</text>
</comment>
<keyword id="KW-0067">ATP-binding</keyword>
<keyword id="KW-0963">Cytoplasm</keyword>
<keyword id="KW-0227">DNA damage</keyword>
<keyword id="KW-0233">DNA recombination</keyword>
<keyword id="KW-0234">DNA repair</keyword>
<keyword id="KW-0238">DNA-binding</keyword>
<keyword id="KW-0378">Hydrolase</keyword>
<keyword id="KW-0547">Nucleotide-binding</keyword>
<keyword id="KW-1185">Reference proteome</keyword>
<protein>
    <recommendedName>
        <fullName evidence="1">Holliday junction branch migration complex subunit RuvB</fullName>
        <ecNumber evidence="1">3.6.4.-</ecNumber>
    </recommendedName>
</protein>